<sequence>MPHGPGTSARPVRVLVVDDSALVRETLAAVLASDPGIEVIGAAGDPYAAVERMRRQAPDVITLDIEMPRMDGLTFLRKLMAQHPIPVVICSSLATAGAEPALRALECGAVEVVAKPRLGTRRFLEESRVRLCDAVKAAARAGPGRPRASAPLVQAKLTADAVLARPRSDAVLQTTERVVVVGASTGGTEALRELLAALPGDAPGLVIVQHMPEVFTAAFARRLDGLCAVAVKEAADGDAVVPGRALIAPGNRHTLLRRSGARYHVEVRDGPLVCRHRPSVDVLFRSAARYAGRNAVGVIMTGMGDDGARGLAELKRSGADTIAQDEATSVVFGMPREAIRLGAADRVLPLPAIPPELLRLCR</sequence>
<reference key="1">
    <citation type="submission" date="2006-01" db="EMBL/GenBank/DDBJ databases">
        <title>Complete sequence of Anaeromyxobacter dehalogenans 2CP-C.</title>
        <authorList>
            <person name="Copeland A."/>
            <person name="Lucas S."/>
            <person name="Lapidus A."/>
            <person name="Barry K."/>
            <person name="Detter J.C."/>
            <person name="Glavina T."/>
            <person name="Hammon N."/>
            <person name="Israni S."/>
            <person name="Pitluck S."/>
            <person name="Brettin T."/>
            <person name="Bruce D."/>
            <person name="Han C."/>
            <person name="Tapia R."/>
            <person name="Gilna P."/>
            <person name="Kiss H."/>
            <person name="Schmutz J."/>
            <person name="Larimer F."/>
            <person name="Land M."/>
            <person name="Kyrpides N."/>
            <person name="Anderson I."/>
            <person name="Sanford R.A."/>
            <person name="Ritalahti K.M."/>
            <person name="Thomas H.S."/>
            <person name="Kirby J.R."/>
            <person name="Zhulin I.B."/>
            <person name="Loeffler F.E."/>
            <person name="Richardson P."/>
        </authorList>
    </citation>
    <scope>NUCLEOTIDE SEQUENCE [LARGE SCALE GENOMIC DNA]</scope>
    <source>
        <strain>2CP-C</strain>
    </source>
</reference>
<name>CHEB5_ANADE</name>
<organism>
    <name type="scientific">Anaeromyxobacter dehalogenans (strain 2CP-C)</name>
    <dbReference type="NCBI Taxonomy" id="290397"/>
    <lineage>
        <taxon>Bacteria</taxon>
        <taxon>Pseudomonadati</taxon>
        <taxon>Myxococcota</taxon>
        <taxon>Myxococcia</taxon>
        <taxon>Myxococcales</taxon>
        <taxon>Cystobacterineae</taxon>
        <taxon>Anaeromyxobacteraceae</taxon>
        <taxon>Anaeromyxobacter</taxon>
    </lineage>
</organism>
<gene>
    <name evidence="1" type="primary">cheB5</name>
    <name type="ordered locus">Adeh_1383</name>
</gene>
<keyword id="KW-0145">Chemotaxis</keyword>
<keyword id="KW-0963">Cytoplasm</keyword>
<keyword id="KW-0378">Hydrolase</keyword>
<keyword id="KW-0597">Phosphoprotein</keyword>
<keyword id="KW-1185">Reference proteome</keyword>
<feature type="chain" id="PRO_0000264260" description="Protein-glutamate methylesterase/protein-glutamine glutaminase 5">
    <location>
        <begin position="1"/>
        <end position="362"/>
    </location>
</feature>
<feature type="domain" description="Response regulatory" evidence="1">
    <location>
        <begin position="13"/>
        <end position="130"/>
    </location>
</feature>
<feature type="domain" description="CheB-type methylesterase" evidence="1">
    <location>
        <begin position="172"/>
        <end position="362"/>
    </location>
</feature>
<feature type="active site" evidence="1">
    <location>
        <position position="184"/>
    </location>
</feature>
<feature type="active site" evidence="1">
    <location>
        <position position="210"/>
    </location>
</feature>
<feature type="active site" evidence="1">
    <location>
        <position position="306"/>
    </location>
</feature>
<feature type="modified residue" description="4-aspartylphosphate" evidence="1">
    <location>
        <position position="64"/>
    </location>
</feature>
<evidence type="ECO:0000255" key="1">
    <source>
        <dbReference type="HAMAP-Rule" id="MF_00099"/>
    </source>
</evidence>
<comment type="function">
    <text evidence="1">Involved in chemotaxis. Part of a chemotaxis signal transduction system that modulates chemotaxis in response to various stimuli. Catalyzes the demethylation of specific methylglutamate residues introduced into the chemoreceptors (methyl-accepting chemotaxis proteins or MCP) by CheR. Also mediates the irreversible deamidation of specific glutamine residues to glutamic acid.</text>
</comment>
<comment type="catalytic activity">
    <reaction evidence="1">
        <text>[protein]-L-glutamate 5-O-methyl ester + H2O = L-glutamyl-[protein] + methanol + H(+)</text>
        <dbReference type="Rhea" id="RHEA:23236"/>
        <dbReference type="Rhea" id="RHEA-COMP:10208"/>
        <dbReference type="Rhea" id="RHEA-COMP:10311"/>
        <dbReference type="ChEBI" id="CHEBI:15377"/>
        <dbReference type="ChEBI" id="CHEBI:15378"/>
        <dbReference type="ChEBI" id="CHEBI:17790"/>
        <dbReference type="ChEBI" id="CHEBI:29973"/>
        <dbReference type="ChEBI" id="CHEBI:82795"/>
        <dbReference type="EC" id="3.1.1.61"/>
    </reaction>
</comment>
<comment type="catalytic activity">
    <reaction evidence="1">
        <text>L-glutaminyl-[protein] + H2O = L-glutamyl-[protein] + NH4(+)</text>
        <dbReference type="Rhea" id="RHEA:16441"/>
        <dbReference type="Rhea" id="RHEA-COMP:10207"/>
        <dbReference type="Rhea" id="RHEA-COMP:10208"/>
        <dbReference type="ChEBI" id="CHEBI:15377"/>
        <dbReference type="ChEBI" id="CHEBI:28938"/>
        <dbReference type="ChEBI" id="CHEBI:29973"/>
        <dbReference type="ChEBI" id="CHEBI:30011"/>
        <dbReference type="EC" id="3.5.1.44"/>
    </reaction>
</comment>
<comment type="subcellular location">
    <subcellularLocation>
        <location evidence="1">Cytoplasm</location>
    </subcellularLocation>
</comment>
<comment type="domain">
    <text evidence="1">Contains a C-terminal catalytic domain, and an N-terminal region which modulates catalytic activity.</text>
</comment>
<comment type="PTM">
    <text evidence="1">Phosphorylated by CheA. Phosphorylation of the N-terminal regulatory domain activates the methylesterase activity.</text>
</comment>
<comment type="similarity">
    <text evidence="1">Belongs to the CheB family.</text>
</comment>
<proteinExistence type="inferred from homology"/>
<protein>
    <recommendedName>
        <fullName evidence="1">Protein-glutamate methylesterase/protein-glutamine glutaminase 5</fullName>
        <ecNumber evidence="1">3.1.1.61</ecNumber>
        <ecNumber evidence="1">3.5.1.44</ecNumber>
    </recommendedName>
</protein>
<accession>Q2IQS6</accession>
<dbReference type="EC" id="3.1.1.61" evidence="1"/>
<dbReference type="EC" id="3.5.1.44" evidence="1"/>
<dbReference type="EMBL" id="CP000251">
    <property type="protein sequence ID" value="ABC81157.1"/>
    <property type="molecule type" value="Genomic_DNA"/>
</dbReference>
<dbReference type="RefSeq" id="WP_011420440.1">
    <property type="nucleotide sequence ID" value="NC_007760.1"/>
</dbReference>
<dbReference type="SMR" id="Q2IQS6"/>
<dbReference type="STRING" id="290397.Adeh_1383"/>
<dbReference type="KEGG" id="ade:Adeh_1383"/>
<dbReference type="eggNOG" id="COG2201">
    <property type="taxonomic scope" value="Bacteria"/>
</dbReference>
<dbReference type="HOGENOM" id="CLU_000445_51_0_7"/>
<dbReference type="OrthoDB" id="9793421at2"/>
<dbReference type="Proteomes" id="UP000001935">
    <property type="component" value="Chromosome"/>
</dbReference>
<dbReference type="GO" id="GO:0005737">
    <property type="term" value="C:cytoplasm"/>
    <property type="evidence" value="ECO:0007669"/>
    <property type="project" value="UniProtKB-SubCell"/>
</dbReference>
<dbReference type="GO" id="GO:0000156">
    <property type="term" value="F:phosphorelay response regulator activity"/>
    <property type="evidence" value="ECO:0007669"/>
    <property type="project" value="InterPro"/>
</dbReference>
<dbReference type="GO" id="GO:0008984">
    <property type="term" value="F:protein-glutamate methylesterase activity"/>
    <property type="evidence" value="ECO:0007669"/>
    <property type="project" value="UniProtKB-UniRule"/>
</dbReference>
<dbReference type="GO" id="GO:0050568">
    <property type="term" value="F:protein-glutamine glutaminase activity"/>
    <property type="evidence" value="ECO:0007669"/>
    <property type="project" value="UniProtKB-UniRule"/>
</dbReference>
<dbReference type="GO" id="GO:0006935">
    <property type="term" value="P:chemotaxis"/>
    <property type="evidence" value="ECO:0007669"/>
    <property type="project" value="UniProtKB-UniRule"/>
</dbReference>
<dbReference type="CDD" id="cd16432">
    <property type="entry name" value="CheB_Rec"/>
    <property type="match status" value="1"/>
</dbReference>
<dbReference type="CDD" id="cd17541">
    <property type="entry name" value="REC_CheB-like"/>
    <property type="match status" value="1"/>
</dbReference>
<dbReference type="Gene3D" id="3.40.50.2300">
    <property type="match status" value="1"/>
</dbReference>
<dbReference type="Gene3D" id="3.40.50.180">
    <property type="entry name" value="Methylesterase CheB, C-terminal domain"/>
    <property type="match status" value="1"/>
</dbReference>
<dbReference type="HAMAP" id="MF_00099">
    <property type="entry name" value="CheB_chemtxs"/>
    <property type="match status" value="1"/>
</dbReference>
<dbReference type="InterPro" id="IPR008248">
    <property type="entry name" value="CheB-like"/>
</dbReference>
<dbReference type="InterPro" id="IPR035909">
    <property type="entry name" value="CheB_C"/>
</dbReference>
<dbReference type="InterPro" id="IPR011006">
    <property type="entry name" value="CheY-like_superfamily"/>
</dbReference>
<dbReference type="InterPro" id="IPR000673">
    <property type="entry name" value="Sig_transdc_resp-reg_Me-estase"/>
</dbReference>
<dbReference type="InterPro" id="IPR001789">
    <property type="entry name" value="Sig_transdc_resp-reg_receiver"/>
</dbReference>
<dbReference type="NCBIfam" id="NF001965">
    <property type="entry name" value="PRK00742.1"/>
    <property type="match status" value="1"/>
</dbReference>
<dbReference type="NCBIfam" id="NF009206">
    <property type="entry name" value="PRK12555.1"/>
    <property type="match status" value="1"/>
</dbReference>
<dbReference type="PANTHER" id="PTHR42872">
    <property type="entry name" value="PROTEIN-GLUTAMATE METHYLESTERASE/PROTEIN-GLUTAMINE GLUTAMINASE"/>
    <property type="match status" value="1"/>
</dbReference>
<dbReference type="PANTHER" id="PTHR42872:SF6">
    <property type="entry name" value="PROTEIN-GLUTAMATE METHYLESTERASE_PROTEIN-GLUTAMINE GLUTAMINASE"/>
    <property type="match status" value="1"/>
</dbReference>
<dbReference type="Pfam" id="PF01339">
    <property type="entry name" value="CheB_methylest"/>
    <property type="match status" value="1"/>
</dbReference>
<dbReference type="Pfam" id="PF00072">
    <property type="entry name" value="Response_reg"/>
    <property type="match status" value="1"/>
</dbReference>
<dbReference type="PIRSF" id="PIRSF000876">
    <property type="entry name" value="RR_chemtxs_CheB"/>
    <property type="match status" value="1"/>
</dbReference>
<dbReference type="SMART" id="SM00448">
    <property type="entry name" value="REC"/>
    <property type="match status" value="1"/>
</dbReference>
<dbReference type="SUPFAM" id="SSF52172">
    <property type="entry name" value="CheY-like"/>
    <property type="match status" value="1"/>
</dbReference>
<dbReference type="SUPFAM" id="SSF52738">
    <property type="entry name" value="Methylesterase CheB, C-terminal domain"/>
    <property type="match status" value="1"/>
</dbReference>
<dbReference type="PROSITE" id="PS50122">
    <property type="entry name" value="CHEB"/>
    <property type="match status" value="1"/>
</dbReference>
<dbReference type="PROSITE" id="PS50110">
    <property type="entry name" value="RESPONSE_REGULATORY"/>
    <property type="match status" value="1"/>
</dbReference>